<protein>
    <recommendedName>
        <fullName evidence="1">tRNA pseudouridine synthase A</fullName>
        <ecNumber evidence="1">5.4.99.12</ecNumber>
    </recommendedName>
    <alternativeName>
        <fullName evidence="1">tRNA pseudouridine(38-40) synthase</fullName>
    </alternativeName>
    <alternativeName>
        <fullName evidence="1">tRNA pseudouridylate synthase I</fullName>
    </alternativeName>
    <alternativeName>
        <fullName evidence="1">tRNA-uridine isomerase I</fullName>
    </alternativeName>
</protein>
<accession>B9DM46</accession>
<proteinExistence type="inferred from homology"/>
<sequence length="267" mass="31201">MRILVKISYQGSNFLGFQIQQHGRTVQQQFEKILKRMHKRHVRIHPSSRTDRGVHAIEQYFHFDTELNIAPDKWQYAMNSALPDDIYVNEVSIVDDDFHCRYDCVGKRYRYKVYQGKHRDVFMSGLKTFYADSLDLEKMNEAAQQFIGTHDFTGFCSQKTEVESKERTLYQSEIIKTENGFDYIVTGSGFLYNMVRVLVAFLIEVGKGKRQPEEVPILLEAKDRKQVPFTAPAEGLYLEKIYLAPQELINDFGPDIKIHRKKSLEND</sequence>
<dbReference type="EC" id="5.4.99.12" evidence="1"/>
<dbReference type="EMBL" id="AM295250">
    <property type="protein sequence ID" value="CAL28610.1"/>
    <property type="molecule type" value="Genomic_DNA"/>
</dbReference>
<dbReference type="RefSeq" id="WP_015900950.1">
    <property type="nucleotide sequence ID" value="NC_012121.1"/>
</dbReference>
<dbReference type="SMR" id="B9DM46"/>
<dbReference type="GeneID" id="93794163"/>
<dbReference type="KEGG" id="sca:SCA_1704"/>
<dbReference type="eggNOG" id="COG0101">
    <property type="taxonomic scope" value="Bacteria"/>
</dbReference>
<dbReference type="HOGENOM" id="CLU_014673_0_1_9"/>
<dbReference type="OrthoDB" id="9811823at2"/>
<dbReference type="BioCyc" id="SCAR396513:SCA_RS08685-MONOMER"/>
<dbReference type="Proteomes" id="UP000000444">
    <property type="component" value="Chromosome"/>
</dbReference>
<dbReference type="GO" id="GO:0003723">
    <property type="term" value="F:RNA binding"/>
    <property type="evidence" value="ECO:0007669"/>
    <property type="project" value="InterPro"/>
</dbReference>
<dbReference type="GO" id="GO:0160147">
    <property type="term" value="F:tRNA pseudouridine(38-40) synthase activity"/>
    <property type="evidence" value="ECO:0007669"/>
    <property type="project" value="UniProtKB-EC"/>
</dbReference>
<dbReference type="GO" id="GO:0031119">
    <property type="term" value="P:tRNA pseudouridine synthesis"/>
    <property type="evidence" value="ECO:0007669"/>
    <property type="project" value="UniProtKB-UniRule"/>
</dbReference>
<dbReference type="CDD" id="cd02570">
    <property type="entry name" value="PseudoU_synth_EcTruA"/>
    <property type="match status" value="1"/>
</dbReference>
<dbReference type="FunFam" id="3.30.70.580:FF:000001">
    <property type="entry name" value="tRNA pseudouridine synthase A"/>
    <property type="match status" value="1"/>
</dbReference>
<dbReference type="Gene3D" id="3.30.70.660">
    <property type="entry name" value="Pseudouridine synthase I, catalytic domain, C-terminal subdomain"/>
    <property type="match status" value="1"/>
</dbReference>
<dbReference type="Gene3D" id="3.30.70.580">
    <property type="entry name" value="Pseudouridine synthase I, catalytic domain, N-terminal subdomain"/>
    <property type="match status" value="1"/>
</dbReference>
<dbReference type="HAMAP" id="MF_00171">
    <property type="entry name" value="TruA"/>
    <property type="match status" value="1"/>
</dbReference>
<dbReference type="InterPro" id="IPR020103">
    <property type="entry name" value="PsdUridine_synth_cat_dom_sf"/>
</dbReference>
<dbReference type="InterPro" id="IPR001406">
    <property type="entry name" value="PsdUridine_synth_TruA"/>
</dbReference>
<dbReference type="InterPro" id="IPR020097">
    <property type="entry name" value="PsdUridine_synth_TruA_a/b_dom"/>
</dbReference>
<dbReference type="InterPro" id="IPR020095">
    <property type="entry name" value="PsdUridine_synth_TruA_C"/>
</dbReference>
<dbReference type="InterPro" id="IPR020094">
    <property type="entry name" value="TruA/RsuA/RluB/E/F_N"/>
</dbReference>
<dbReference type="NCBIfam" id="TIGR00071">
    <property type="entry name" value="hisT_truA"/>
    <property type="match status" value="1"/>
</dbReference>
<dbReference type="PANTHER" id="PTHR11142">
    <property type="entry name" value="PSEUDOURIDYLATE SYNTHASE"/>
    <property type="match status" value="1"/>
</dbReference>
<dbReference type="PANTHER" id="PTHR11142:SF0">
    <property type="entry name" value="TRNA PSEUDOURIDINE SYNTHASE-LIKE 1"/>
    <property type="match status" value="1"/>
</dbReference>
<dbReference type="Pfam" id="PF01416">
    <property type="entry name" value="PseudoU_synth_1"/>
    <property type="match status" value="2"/>
</dbReference>
<dbReference type="PIRSF" id="PIRSF001430">
    <property type="entry name" value="tRNA_psdUrid_synth"/>
    <property type="match status" value="1"/>
</dbReference>
<dbReference type="SUPFAM" id="SSF55120">
    <property type="entry name" value="Pseudouridine synthase"/>
    <property type="match status" value="1"/>
</dbReference>
<feature type="chain" id="PRO_1000194569" description="tRNA pseudouridine synthase A">
    <location>
        <begin position="1"/>
        <end position="267"/>
    </location>
</feature>
<feature type="active site" description="Nucleophile" evidence="1">
    <location>
        <position position="51"/>
    </location>
</feature>
<feature type="binding site" evidence="1">
    <location>
        <position position="109"/>
    </location>
    <ligand>
        <name>substrate</name>
    </ligand>
</feature>
<evidence type="ECO:0000255" key="1">
    <source>
        <dbReference type="HAMAP-Rule" id="MF_00171"/>
    </source>
</evidence>
<name>TRUA_STACT</name>
<gene>
    <name evidence="1" type="primary">truA</name>
    <name type="ordered locus">Sca_1704</name>
</gene>
<reference key="1">
    <citation type="journal article" date="2009" name="Appl. Environ. Microbiol.">
        <title>Genome analysis of the meat starter culture bacterium Staphylococcus carnosus TM300.</title>
        <authorList>
            <person name="Rosenstein R."/>
            <person name="Nerz C."/>
            <person name="Biswas L."/>
            <person name="Resch A."/>
            <person name="Raddatz G."/>
            <person name="Schuster S.C."/>
            <person name="Goetz F."/>
        </authorList>
    </citation>
    <scope>NUCLEOTIDE SEQUENCE [LARGE SCALE GENOMIC DNA]</scope>
    <source>
        <strain>TM300</strain>
    </source>
</reference>
<comment type="function">
    <text evidence="1">Formation of pseudouridine at positions 38, 39 and 40 in the anticodon stem and loop of transfer RNAs.</text>
</comment>
<comment type="catalytic activity">
    <reaction evidence="1">
        <text>uridine(38/39/40) in tRNA = pseudouridine(38/39/40) in tRNA</text>
        <dbReference type="Rhea" id="RHEA:22376"/>
        <dbReference type="Rhea" id="RHEA-COMP:10085"/>
        <dbReference type="Rhea" id="RHEA-COMP:10087"/>
        <dbReference type="ChEBI" id="CHEBI:65314"/>
        <dbReference type="ChEBI" id="CHEBI:65315"/>
        <dbReference type="EC" id="5.4.99.12"/>
    </reaction>
</comment>
<comment type="subunit">
    <text evidence="1">Homodimer.</text>
</comment>
<comment type="similarity">
    <text evidence="1">Belongs to the tRNA pseudouridine synthase TruA family.</text>
</comment>
<organism>
    <name type="scientific">Staphylococcus carnosus (strain TM300)</name>
    <dbReference type="NCBI Taxonomy" id="396513"/>
    <lineage>
        <taxon>Bacteria</taxon>
        <taxon>Bacillati</taxon>
        <taxon>Bacillota</taxon>
        <taxon>Bacilli</taxon>
        <taxon>Bacillales</taxon>
        <taxon>Staphylococcaceae</taxon>
        <taxon>Staphylococcus</taxon>
    </lineage>
</organism>
<keyword id="KW-0413">Isomerase</keyword>
<keyword id="KW-1185">Reference proteome</keyword>
<keyword id="KW-0819">tRNA processing</keyword>